<accession>Q04TG5</accession>
<evidence type="ECO:0000255" key="1">
    <source>
        <dbReference type="HAMAP-Rule" id="MF_00009"/>
    </source>
</evidence>
<feature type="chain" id="PRO_0000284232" description="Endoribonuclease YbeY">
    <location>
        <begin position="1"/>
        <end position="143"/>
    </location>
</feature>
<feature type="binding site" evidence="1">
    <location>
        <position position="109"/>
    </location>
    <ligand>
        <name>Zn(2+)</name>
        <dbReference type="ChEBI" id="CHEBI:29105"/>
        <note>catalytic</note>
    </ligand>
</feature>
<feature type="binding site" evidence="1">
    <location>
        <position position="113"/>
    </location>
    <ligand>
        <name>Zn(2+)</name>
        <dbReference type="ChEBI" id="CHEBI:29105"/>
        <note>catalytic</note>
    </ligand>
</feature>
<feature type="binding site" evidence="1">
    <location>
        <position position="119"/>
    </location>
    <ligand>
        <name>Zn(2+)</name>
        <dbReference type="ChEBI" id="CHEBI:29105"/>
        <note>catalytic</note>
    </ligand>
</feature>
<protein>
    <recommendedName>
        <fullName evidence="1">Endoribonuclease YbeY</fullName>
        <ecNumber evidence="1">3.1.-.-</ecNumber>
    </recommendedName>
</protein>
<comment type="function">
    <text evidence="1">Single strand-specific metallo-endoribonuclease involved in late-stage 70S ribosome quality control and in maturation of the 3' terminus of the 16S rRNA.</text>
</comment>
<comment type="cofactor">
    <cofactor evidence="1">
        <name>Zn(2+)</name>
        <dbReference type="ChEBI" id="CHEBI:29105"/>
    </cofactor>
    <text evidence="1">Binds 1 zinc ion.</text>
</comment>
<comment type="subcellular location">
    <subcellularLocation>
        <location evidence="1">Cytoplasm</location>
    </subcellularLocation>
</comment>
<comment type="similarity">
    <text evidence="1">Belongs to the endoribonuclease YbeY family.</text>
</comment>
<sequence length="143" mass="16459">MIFNCGILFRKELKDFPCELGLLLVGDSDMRKINRLRRGKDKTTDVLSFPLEFDSAPLQNVLQKRTGFDSNSLPPIALGEIVISVDTLEKQAVEIGHSVKDEFYRLLVHGFLHLLGYDHERGEEEERIMKLKEDECLEILQEL</sequence>
<organism>
    <name type="scientific">Leptospira borgpetersenii serovar Hardjo-bovis (strain JB197)</name>
    <dbReference type="NCBI Taxonomy" id="355277"/>
    <lineage>
        <taxon>Bacteria</taxon>
        <taxon>Pseudomonadati</taxon>
        <taxon>Spirochaetota</taxon>
        <taxon>Spirochaetia</taxon>
        <taxon>Leptospirales</taxon>
        <taxon>Leptospiraceae</taxon>
        <taxon>Leptospira</taxon>
    </lineage>
</organism>
<dbReference type="EC" id="3.1.-.-" evidence="1"/>
<dbReference type="EMBL" id="CP000350">
    <property type="protein sequence ID" value="ABJ75805.1"/>
    <property type="molecule type" value="Genomic_DNA"/>
</dbReference>
<dbReference type="RefSeq" id="WP_011669985.1">
    <property type="nucleotide sequence ID" value="NC_008510.1"/>
</dbReference>
<dbReference type="SMR" id="Q04TG5"/>
<dbReference type="KEGG" id="lbj:LBJ_1201"/>
<dbReference type="HOGENOM" id="CLU_106710_3_3_12"/>
<dbReference type="Proteomes" id="UP000000656">
    <property type="component" value="Chromosome 1"/>
</dbReference>
<dbReference type="GO" id="GO:0005737">
    <property type="term" value="C:cytoplasm"/>
    <property type="evidence" value="ECO:0007669"/>
    <property type="project" value="UniProtKB-SubCell"/>
</dbReference>
<dbReference type="GO" id="GO:0004222">
    <property type="term" value="F:metalloendopeptidase activity"/>
    <property type="evidence" value="ECO:0007669"/>
    <property type="project" value="InterPro"/>
</dbReference>
<dbReference type="GO" id="GO:0004521">
    <property type="term" value="F:RNA endonuclease activity"/>
    <property type="evidence" value="ECO:0007669"/>
    <property type="project" value="UniProtKB-UniRule"/>
</dbReference>
<dbReference type="GO" id="GO:0008270">
    <property type="term" value="F:zinc ion binding"/>
    <property type="evidence" value="ECO:0007669"/>
    <property type="project" value="UniProtKB-UniRule"/>
</dbReference>
<dbReference type="GO" id="GO:0006364">
    <property type="term" value="P:rRNA processing"/>
    <property type="evidence" value="ECO:0007669"/>
    <property type="project" value="UniProtKB-UniRule"/>
</dbReference>
<dbReference type="Gene3D" id="3.40.390.30">
    <property type="entry name" value="Metalloproteases ('zincins'), catalytic domain"/>
    <property type="match status" value="1"/>
</dbReference>
<dbReference type="HAMAP" id="MF_00009">
    <property type="entry name" value="Endoribonucl_YbeY"/>
    <property type="match status" value="1"/>
</dbReference>
<dbReference type="InterPro" id="IPR023091">
    <property type="entry name" value="MetalPrtase_cat_dom_sf_prd"/>
</dbReference>
<dbReference type="InterPro" id="IPR002036">
    <property type="entry name" value="YbeY"/>
</dbReference>
<dbReference type="InterPro" id="IPR020549">
    <property type="entry name" value="YbeY_CS"/>
</dbReference>
<dbReference type="NCBIfam" id="TIGR00043">
    <property type="entry name" value="rRNA maturation RNase YbeY"/>
    <property type="match status" value="1"/>
</dbReference>
<dbReference type="PANTHER" id="PTHR46986">
    <property type="entry name" value="ENDORIBONUCLEASE YBEY, CHLOROPLASTIC"/>
    <property type="match status" value="1"/>
</dbReference>
<dbReference type="PANTHER" id="PTHR46986:SF1">
    <property type="entry name" value="ENDORIBONUCLEASE YBEY, CHLOROPLASTIC"/>
    <property type="match status" value="1"/>
</dbReference>
<dbReference type="Pfam" id="PF02130">
    <property type="entry name" value="YbeY"/>
    <property type="match status" value="1"/>
</dbReference>
<dbReference type="SUPFAM" id="SSF55486">
    <property type="entry name" value="Metalloproteases ('zincins'), catalytic domain"/>
    <property type="match status" value="1"/>
</dbReference>
<dbReference type="PROSITE" id="PS01306">
    <property type="entry name" value="UPF0054"/>
    <property type="match status" value="1"/>
</dbReference>
<reference key="1">
    <citation type="journal article" date="2006" name="Proc. Natl. Acad. Sci. U.S.A.">
        <title>Genome reduction in Leptospira borgpetersenii reflects limited transmission potential.</title>
        <authorList>
            <person name="Bulach D.M."/>
            <person name="Zuerner R.L."/>
            <person name="Wilson P."/>
            <person name="Seemann T."/>
            <person name="McGrath A."/>
            <person name="Cullen P.A."/>
            <person name="Davis J."/>
            <person name="Johnson M."/>
            <person name="Kuczek E."/>
            <person name="Alt D.P."/>
            <person name="Peterson-Burch B."/>
            <person name="Coppel R.L."/>
            <person name="Rood J.I."/>
            <person name="Davies J.K."/>
            <person name="Adler B."/>
        </authorList>
    </citation>
    <scope>NUCLEOTIDE SEQUENCE [LARGE SCALE GENOMIC DNA]</scope>
    <source>
        <strain>JB197</strain>
    </source>
</reference>
<proteinExistence type="inferred from homology"/>
<keyword id="KW-0963">Cytoplasm</keyword>
<keyword id="KW-0255">Endonuclease</keyword>
<keyword id="KW-0378">Hydrolase</keyword>
<keyword id="KW-0479">Metal-binding</keyword>
<keyword id="KW-0540">Nuclease</keyword>
<keyword id="KW-0690">Ribosome biogenesis</keyword>
<keyword id="KW-0698">rRNA processing</keyword>
<keyword id="KW-0862">Zinc</keyword>
<name>YBEY_LEPBJ</name>
<gene>
    <name evidence="1" type="primary">ybeY</name>
    <name type="ordered locus">LBJ_1201</name>
</gene>